<comment type="function">
    <text>Binds to sialic acid-containing receptors on the cell surface, bringing about the attachment of the virus particle to the cell. This attachment induces virion internalization of about two third of the virus particles through clathrin-dependent endocytosis and about one third through a clathrin- and caveolin-independent pathway. Plays a major role in the determination of host range restriction and virulence. Class I viral fusion protein. Responsible for penetration of the virus into the cell cytoplasm by mediating the fusion of the membrane of the endocytosed virus particle with the endosomal membrane. Low pH in endosomes induces an irreversible conformational change in HA2, releasing the fusion hydrophobic peptide. Several trimers are required to form a competent fusion pore.</text>
</comment>
<comment type="function">
    <text evidence="1">Binds to sialic acid-containing receptors on the cell surface, bringing about the attachment of the virus particle to the cell. This attachment induces virion internalization either through clathrin-dependent endocytosis or through clathrin- and caveolin-independent pathway. Plays a major role in the determination of host range restriction and virulence. Class I viral fusion protein. Responsible for penetration of the virus into the cell cytoplasm by mediating the fusion of the membrane of the endocytosed virus particle with the endosomal membrane. Low pH in endosomes induces an irreversible conformational change in HA2, releasing the fusion hydrophobic peptide. Several trimers are required to form a competent fusion pore.</text>
</comment>
<comment type="subunit">
    <text evidence="1">Homotrimer of disulfide-linked HA1-HA2.</text>
</comment>
<comment type="subcellular location">
    <subcellularLocation>
        <location evidence="1">Virion membrane</location>
        <topology evidence="1">Single-pass type I membrane protein</topology>
    </subcellularLocation>
    <subcellularLocation>
        <location evidence="1">Host apical cell membrane</location>
        <topology evidence="1">Single-pass type I membrane protein</topology>
    </subcellularLocation>
    <text evidence="1">Targeted to the apical plasma membrane in epithelial polarized cells through a signal present in the transmembrane domain. Associated with glycosphingolipid- and cholesterol-enriched detergent-resistant lipid rafts.</text>
</comment>
<comment type="PTM">
    <text evidence="1">Palmitoylated.</text>
</comment>
<comment type="PTM">
    <text evidence="1">In natural infection, inactive HA is matured into HA1 and HA2 outside the cell by one or more trypsin-like, arginine-specific endoprotease secreted by the bronchial epithelial cells. One identified protease that may be involved in this process is secreted in lungs by club cells.</text>
</comment>
<comment type="miscellaneous">
    <text>Major glycoprotein, comprises over 80% of the envelope proteins present in virus particle.</text>
</comment>
<comment type="miscellaneous">
    <text>The extent of infection into host organism is determined by HA. Influenza viruses bud from the apical surface of polarized epithelial cells (e.g. bronchial epithelial cells) into lumen of lungs and are therefore usually pneumotropic. The reason is that HA is cleaved by tryptase clara which is restricted to lungs. However, HAs of H5 and H7 pantropic avian viruses subtypes can be cleaved by furin and subtilisin-type enzymes, allowing the virus to grow in other organs than lungs.</text>
</comment>
<comment type="miscellaneous">
    <text evidence="2">The influenza A genome consist of 8 RNA segments. Genetic variation of hemagglutinin and/or neuraminidase genes results in the emergence of new influenza strains. The mechanism of variation can be the result of point mutations or the result of genetic reassortment between segments of two different strains.</text>
</comment>
<comment type="similarity">
    <text evidence="1">Belongs to the influenza viruses hemagglutinin family.</text>
</comment>
<proteinExistence type="inferred from homology"/>
<protein>
    <recommendedName>
        <fullName evidence="1">Hemagglutinin</fullName>
    </recommendedName>
    <component>
        <recommendedName>
            <fullName evidence="1">Hemagglutinin HA1 chain</fullName>
        </recommendedName>
    </component>
    <component>
        <recommendedName>
            <fullName evidence="1">Hemagglutinin HA2 chain</fullName>
        </recommendedName>
    </component>
</protein>
<organismHost>
    <name type="scientific">Aves</name>
    <dbReference type="NCBI Taxonomy" id="8782"/>
</organismHost>
<name>HEMA_I76A3</name>
<gene>
    <name evidence="1" type="primary">HA</name>
</gene>
<reference key="1">
    <citation type="journal article" date="1992" name="J. Virol.">
        <title>Evolution of the H3 influenza virus hemagglutinin from human and nonhuman hosts.</title>
        <authorList>
            <person name="Bean W.J."/>
            <person name="Schell M."/>
            <person name="Katz J."/>
            <person name="Kawaoka Y."/>
            <person name="Naeve C."/>
            <person name="Gorman O."/>
            <person name="Webster R.G."/>
        </authorList>
    </citation>
    <scope>NUCLEOTIDE SEQUENCE [GENOMIC RNA]</scope>
</reference>
<feature type="signal peptide" evidence="1">
    <location>
        <begin position="1"/>
        <end position="16"/>
    </location>
</feature>
<feature type="chain" id="PRO_0000440449" description="Hemagglutinin" evidence="1">
    <location>
        <begin position="17"/>
        <end position="566"/>
    </location>
</feature>
<feature type="chain" id="PRO_0000038908" description="Hemagglutinin HA1 chain">
    <location>
        <begin position="17"/>
        <end position="344"/>
    </location>
</feature>
<feature type="chain" id="PRO_0000038909" description="Hemagglutinin HA2 chain" evidence="1">
    <location>
        <begin position="346"/>
        <end position="566"/>
    </location>
</feature>
<feature type="topological domain" description="Extracellular" evidence="1">
    <location>
        <begin position="17"/>
        <end position="530"/>
    </location>
</feature>
<feature type="transmembrane region" description="Helical" evidence="1">
    <location>
        <begin position="531"/>
        <end position="551"/>
    </location>
</feature>
<feature type="topological domain" description="Cytoplasmic" evidence="1">
    <location>
        <begin position="552"/>
        <end position="566"/>
    </location>
</feature>
<feature type="site" description="Cleavage; by host" evidence="1">
    <location>
        <begin position="345"/>
        <end position="346"/>
    </location>
</feature>
<feature type="lipid moiety-binding region" description="S-palmitoyl cysteine; by host" evidence="1">
    <location>
        <position position="555"/>
    </location>
</feature>
<feature type="lipid moiety-binding region" description="S-palmitoyl cysteine; by host" evidence="1">
    <location>
        <position position="562"/>
    </location>
</feature>
<feature type="lipid moiety-binding region" description="S-palmitoyl cysteine; by host" evidence="1">
    <location>
        <position position="565"/>
    </location>
</feature>
<feature type="glycosylation site" description="N-linked (GlcNAc...) asparagine; by host" evidence="1">
    <location>
        <position position="23"/>
    </location>
</feature>
<feature type="glycosylation site" description="N-linked (GlcNAc...) asparagine; by host" evidence="1">
    <location>
        <position position="24"/>
    </location>
</feature>
<feature type="glycosylation site" description="N-linked (GlcNAc...) asparagine; by host" evidence="1">
    <location>
        <position position="38"/>
    </location>
</feature>
<feature type="glycosylation site" description="N-linked (GlcNAc...) asparagine; by host" evidence="1">
    <location>
        <position position="54"/>
    </location>
</feature>
<feature type="glycosylation site" description="N-linked (GlcNAc...) asparagine; by host" evidence="1">
    <location>
        <position position="181"/>
    </location>
</feature>
<feature type="glycosylation site" description="N-linked (GlcNAc...) asparagine; by host" evidence="1">
    <location>
        <position position="301"/>
    </location>
</feature>
<feature type="glycosylation site" description="N-linked (GlcNAc...) asparagine; by host" evidence="1">
    <location>
        <position position="499"/>
    </location>
</feature>
<feature type="disulfide bond" description="Interchain (between HA1 and HA2 chains)" evidence="1">
    <location>
        <begin position="30"/>
        <end position="482"/>
    </location>
</feature>
<feature type="disulfide bond" evidence="1">
    <location>
        <begin position="68"/>
        <end position="293"/>
    </location>
</feature>
<feature type="disulfide bond" evidence="1">
    <location>
        <begin position="80"/>
        <end position="92"/>
    </location>
</feature>
<feature type="disulfide bond" evidence="1">
    <location>
        <begin position="113"/>
        <end position="155"/>
    </location>
</feature>
<feature type="disulfide bond" evidence="1">
    <location>
        <begin position="297"/>
        <end position="321"/>
    </location>
</feature>
<feature type="disulfide bond" evidence="1">
    <location>
        <begin position="489"/>
        <end position="493"/>
    </location>
</feature>
<keyword id="KW-1167">Clathrin- and caveolin-independent endocytosis of virus by host</keyword>
<keyword id="KW-1165">Clathrin-mediated endocytosis of virus by host</keyword>
<keyword id="KW-1015">Disulfide bond</keyword>
<keyword id="KW-1170">Fusion of virus membrane with host endosomal membrane</keyword>
<keyword id="KW-1168">Fusion of virus membrane with host membrane</keyword>
<keyword id="KW-0325">Glycoprotein</keyword>
<keyword id="KW-0348">Hemagglutinin</keyword>
<keyword id="KW-1032">Host cell membrane</keyword>
<keyword id="KW-1043">Host membrane</keyword>
<keyword id="KW-0945">Host-virus interaction</keyword>
<keyword id="KW-0449">Lipoprotein</keyword>
<keyword id="KW-0472">Membrane</keyword>
<keyword id="KW-0564">Palmitate</keyword>
<keyword id="KW-0732">Signal</keyword>
<keyword id="KW-0812">Transmembrane</keyword>
<keyword id="KW-1133">Transmembrane helix</keyword>
<keyword id="KW-1161">Viral attachment to host cell</keyword>
<keyword id="KW-0261">Viral envelope protein</keyword>
<keyword id="KW-1162">Viral penetration into host cytoplasm</keyword>
<keyword id="KW-0946">Virion</keyword>
<keyword id="KW-1164">Virus endocytosis by host</keyword>
<keyword id="KW-1160">Virus entry into host cell</keyword>
<organism>
    <name type="scientific">Influenza A virus (strain A/Duck/Alberta/78/1976 H3N8)</name>
    <dbReference type="NCBI Taxonomy" id="385646"/>
    <lineage>
        <taxon>Viruses</taxon>
        <taxon>Riboviria</taxon>
        <taxon>Orthornavirae</taxon>
        <taxon>Negarnaviricota</taxon>
        <taxon>Polyploviricotina</taxon>
        <taxon>Insthoviricetes</taxon>
        <taxon>Articulavirales</taxon>
        <taxon>Orthomyxoviridae</taxon>
        <taxon>Alphainfluenzavirus</taxon>
        <taxon>Alphainfluenzavirus influenzae</taxon>
        <taxon>Influenza A virus</taxon>
    </lineage>
</organism>
<evidence type="ECO:0000255" key="1">
    <source>
        <dbReference type="HAMAP-Rule" id="MF_04072"/>
    </source>
</evidence>
<evidence type="ECO:0000305" key="2"/>
<sequence>MKTIIVLSYFFCLALSQDYSESNNSTATLCLGHHAVPNGTIVKTITDDQIEVTNATELVQSSSTGKICNNPHRILDGRDCTLIDALLGDPHCDVFQDETWDLYVERSSAFSNCYPYDVPDYDSLRSLVASSGTLEFITEGFTWTGVTQNGGSNACKRGPASGFFSRLNWLTKSGSTYPVLNVTMPNNDNFDKLYVWGVHHPSTNQEQTNLYVQASGRVTVSTRRSQQTIIPNIGSRPWVRGQSGRISIYWTIVKPGDVLVINSNGNLIAPRGYFKMRTGKSSIMRSDAPIDTCISECITPNGSIPNDMPFQNVNKITYGACPKYVKQGTLKLATGMRNVPEKQTRGLFGAIAGFIENGWEGMIDGWYGFRHQNSEGTGQAADLKSTQAAIDQINGKLNRVIEKTNEKFHQIEKEFSEVEGRIQDLEKYVEDTKIDLWSDNAELLVALENQHTIDLTDSEMNKLFEKTRRQLRENAEVMGNGCFKIYHKCDNACIESIRNGTYDHDIYRDEALNNRFQIKGVELKSGYKDWILWISFAISCFLLCVVLLGFIMWACQRGNIRCNICI</sequence>
<dbReference type="EMBL" id="M73771">
    <property type="protein sequence ID" value="ABF60581.1"/>
    <property type="molecule type" value="Genomic_RNA"/>
</dbReference>
<dbReference type="SMR" id="P26134"/>
<dbReference type="GlyCosmos" id="P26134">
    <property type="glycosylation" value="7 sites, No reported glycans"/>
</dbReference>
<dbReference type="GO" id="GO:0020002">
    <property type="term" value="C:host cell plasma membrane"/>
    <property type="evidence" value="ECO:0007669"/>
    <property type="project" value="UniProtKB-SubCell"/>
</dbReference>
<dbReference type="GO" id="GO:0016020">
    <property type="term" value="C:membrane"/>
    <property type="evidence" value="ECO:0007669"/>
    <property type="project" value="UniProtKB-UniRule"/>
</dbReference>
<dbReference type="GO" id="GO:0019031">
    <property type="term" value="C:viral envelope"/>
    <property type="evidence" value="ECO:0007669"/>
    <property type="project" value="UniProtKB-UniRule"/>
</dbReference>
<dbReference type="GO" id="GO:0055036">
    <property type="term" value="C:virion membrane"/>
    <property type="evidence" value="ECO:0007669"/>
    <property type="project" value="UniProtKB-SubCell"/>
</dbReference>
<dbReference type="GO" id="GO:0046789">
    <property type="term" value="F:host cell surface receptor binding"/>
    <property type="evidence" value="ECO:0007669"/>
    <property type="project" value="UniProtKB-UniRule"/>
</dbReference>
<dbReference type="GO" id="GO:0075512">
    <property type="term" value="P:clathrin-dependent endocytosis of virus by host cell"/>
    <property type="evidence" value="ECO:0007669"/>
    <property type="project" value="UniProtKB-UniRule"/>
</dbReference>
<dbReference type="GO" id="GO:0039654">
    <property type="term" value="P:fusion of virus membrane with host endosome membrane"/>
    <property type="evidence" value="ECO:0007669"/>
    <property type="project" value="UniProtKB-UniRule"/>
</dbReference>
<dbReference type="GO" id="GO:0019064">
    <property type="term" value="P:fusion of virus membrane with host plasma membrane"/>
    <property type="evidence" value="ECO:0007669"/>
    <property type="project" value="InterPro"/>
</dbReference>
<dbReference type="GO" id="GO:0046761">
    <property type="term" value="P:viral budding from plasma membrane"/>
    <property type="evidence" value="ECO:0007669"/>
    <property type="project" value="UniProtKB-UniRule"/>
</dbReference>
<dbReference type="GO" id="GO:0019062">
    <property type="term" value="P:virion attachment to host cell"/>
    <property type="evidence" value="ECO:0007669"/>
    <property type="project" value="UniProtKB-KW"/>
</dbReference>
<dbReference type="FunFam" id="3.90.20.10:FF:000001">
    <property type="entry name" value="Hemagglutinin"/>
    <property type="match status" value="1"/>
</dbReference>
<dbReference type="FunFam" id="3.90.209.20:FF:000001">
    <property type="entry name" value="Hemagglutinin"/>
    <property type="match status" value="1"/>
</dbReference>
<dbReference type="Gene3D" id="3.90.20.10">
    <property type="match status" value="1"/>
</dbReference>
<dbReference type="Gene3D" id="3.90.209.20">
    <property type="match status" value="1"/>
</dbReference>
<dbReference type="HAMAP" id="MF_04072">
    <property type="entry name" value="INFV_HEMA"/>
    <property type="match status" value="1"/>
</dbReference>
<dbReference type="InterPro" id="IPR008980">
    <property type="entry name" value="Capsid_hemagglutn"/>
</dbReference>
<dbReference type="InterPro" id="IPR013828">
    <property type="entry name" value="Hemagglutn_HA1_a/b_dom_sf"/>
</dbReference>
<dbReference type="InterPro" id="IPR000149">
    <property type="entry name" value="Hemagglutn_influenz_A"/>
</dbReference>
<dbReference type="InterPro" id="IPR001364">
    <property type="entry name" value="Hemagglutn_influenz_A/B"/>
</dbReference>
<dbReference type="Pfam" id="PF00509">
    <property type="entry name" value="Hemagglutinin"/>
    <property type="match status" value="1"/>
</dbReference>
<dbReference type="PRINTS" id="PR00330">
    <property type="entry name" value="HEMAGGLUTN1"/>
</dbReference>
<dbReference type="PRINTS" id="PR00329">
    <property type="entry name" value="HEMAGGLUTN12"/>
</dbReference>
<dbReference type="SUPFAM" id="SSF58064">
    <property type="entry name" value="Influenza hemagglutinin (stalk)"/>
    <property type="match status" value="1"/>
</dbReference>
<dbReference type="SUPFAM" id="SSF49818">
    <property type="entry name" value="Viral protein domain"/>
    <property type="match status" value="1"/>
</dbReference>
<accession>P26134</accession>
<accession>Q1G0M2</accession>